<keyword id="KW-0027">Amidation</keyword>
<keyword id="KW-0878">Amphibian defense peptide</keyword>
<keyword id="KW-0044">Antibiotic</keyword>
<keyword id="KW-0929">Antimicrobial</keyword>
<keyword id="KW-0903">Direct protein sequencing</keyword>
<keyword id="KW-0391">Immunity</keyword>
<keyword id="KW-0399">Innate immunity</keyword>
<keyword id="KW-0472">Membrane</keyword>
<keyword id="KW-0964">Secreted</keyword>
<keyword id="KW-1052">Target cell membrane</keyword>
<keyword id="KW-1053">Target membrane</keyword>
<feature type="peptide" id="PRO_0000457134" description="Alyteserin-2a" evidence="1">
    <location>
        <begin position="1"/>
        <end position="16"/>
    </location>
</feature>
<feature type="modified residue" description="Leucine amide" evidence="1">
    <location>
        <position position="16"/>
    </location>
</feature>
<proteinExistence type="evidence at protein level"/>
<comment type="function">
    <text evidence="1">Shows more potent growth inhibitory activity against the Gram-positive bacteria S.aureus (MIC=50 uM) than against the Gram-negative bacteria E.coli (MIC=150 uM). Has a weak hemolytic activity against human erythrocytes (LC(50)=135 uM).</text>
</comment>
<comment type="subcellular location">
    <subcellularLocation>
        <location evidence="1">Secreted</location>
    </subcellularLocation>
    <subcellularLocation>
        <location evidence="3">Target cell membrane</location>
    </subcellularLocation>
</comment>
<comment type="tissue specificity">
    <text evidence="4">Expressed by the skin glands.</text>
</comment>
<comment type="mass spectrometry" mass="1582.1" method="MALDI" evidence="1"/>
<comment type="similarity">
    <text evidence="3">Belongs to the frog skin active peptide (FSAP) family. Alyteserin-2 subfamily.</text>
</comment>
<evidence type="ECO:0000269" key="1">
    <source>
    </source>
</evidence>
<evidence type="ECO:0000303" key="2">
    <source>
    </source>
</evidence>
<evidence type="ECO:0000305" key="3"/>
<evidence type="ECO:0000305" key="4">
    <source>
    </source>
</evidence>
<dbReference type="GO" id="GO:0005576">
    <property type="term" value="C:extracellular region"/>
    <property type="evidence" value="ECO:0007669"/>
    <property type="project" value="UniProtKB-SubCell"/>
</dbReference>
<dbReference type="GO" id="GO:0016020">
    <property type="term" value="C:membrane"/>
    <property type="evidence" value="ECO:0007669"/>
    <property type="project" value="UniProtKB-KW"/>
</dbReference>
<dbReference type="GO" id="GO:0044218">
    <property type="term" value="C:other organism cell membrane"/>
    <property type="evidence" value="ECO:0007669"/>
    <property type="project" value="UniProtKB-KW"/>
</dbReference>
<dbReference type="GO" id="GO:0042742">
    <property type="term" value="P:defense response to bacterium"/>
    <property type="evidence" value="ECO:0007669"/>
    <property type="project" value="UniProtKB-KW"/>
</dbReference>
<dbReference type="GO" id="GO:0045087">
    <property type="term" value="P:innate immune response"/>
    <property type="evidence" value="ECO:0007669"/>
    <property type="project" value="UniProtKB-KW"/>
</dbReference>
<accession>P0DQW5</accession>
<protein>
    <recommendedName>
        <fullName evidence="2">Alyteserin-2a</fullName>
    </recommendedName>
</protein>
<reference key="1">
    <citation type="journal article" date="2009" name="Peptides">
        <title>The alyteserins: two families of antimicrobial peptides from the skin secretions of the midwife toad Alytes obstetricans (Alytidae).</title>
        <authorList>
            <person name="Conlon J.M."/>
            <person name="Demandt A."/>
            <person name="Nielsen P.F."/>
            <person name="Leprince J."/>
            <person name="Vaudry H."/>
            <person name="Woodhams D.C."/>
        </authorList>
    </citation>
    <scope>PROTEIN SEQUENCE</scope>
    <scope>FUNCTION</scope>
    <scope>SUBCELLULAR LOCATION</scope>
    <scope>AMIDATION AT LEU-16</scope>
    <scope>MASS SPECTROMETRY</scope>
    <source>
        <tissue>Skin secretion</tissue>
    </source>
</reference>
<name>ATI2A_ALYOB</name>
<organism>
    <name type="scientific">Alytes obstetricans</name>
    <name type="common">Common midwife toad</name>
    <name type="synonym">Bufo obstetricans</name>
    <dbReference type="NCBI Taxonomy" id="8443"/>
    <lineage>
        <taxon>Eukaryota</taxon>
        <taxon>Metazoa</taxon>
        <taxon>Chordata</taxon>
        <taxon>Craniata</taxon>
        <taxon>Vertebrata</taxon>
        <taxon>Euteleostomi</taxon>
        <taxon>Amphibia</taxon>
        <taxon>Batrachia</taxon>
        <taxon>Anura</taxon>
        <taxon>Alytidae</taxon>
        <taxon>Alytinae</taxon>
        <taxon>Alytes</taxon>
    </lineage>
</organism>
<sequence length="16" mass="1584">ILGKLLSTAAGLLSNL</sequence>